<sequence>MREPDFLNHFLKKGYFKKHAKAVLALSGGLDSMFLFKVLSTYQKELEIELILAHVNHKQRIESDWEEKELRKLAAEAELPIYISNFSGEFSEARARNFRYDFFQEVMKKTGATALVTAHHADDQVETILMRLIRGTRLRYLSGIKEKQVVGEIEIIRPFLHFQKKDFPSIFHFEDTSNQENHYFRNRIRNSYLPELEKENPRFRDAILGIGNEILDYDLAIAELSNNINVEDLQQLFSYSESTQRVLLQTYLNRFPDLNLTKAQFAEVQQILKSKSQYRHPIKNGYELIKEYQQFQICKISPQADEKEDELVLHYQNQVAYQGYLFSFGLPLEGESIQQIPVSRETSIHIRHRKTGDVLIQNGHRKKLRRLFIDLKIPMEKRNSALIIEQFGEIVSILGIATNNLSKKTKNDIMNTVLYIEKIDR</sequence>
<accession>C1CNP4</accession>
<evidence type="ECO:0000255" key="1">
    <source>
        <dbReference type="HAMAP-Rule" id="MF_01161"/>
    </source>
</evidence>
<gene>
    <name evidence="1" type="primary">tilS</name>
    <name type="ordered locus">SPT_0045</name>
</gene>
<keyword id="KW-0067">ATP-binding</keyword>
<keyword id="KW-0963">Cytoplasm</keyword>
<keyword id="KW-0436">Ligase</keyword>
<keyword id="KW-0547">Nucleotide-binding</keyword>
<keyword id="KW-0819">tRNA processing</keyword>
<dbReference type="EC" id="6.3.4.19" evidence="1"/>
<dbReference type="EMBL" id="CP000921">
    <property type="protein sequence ID" value="ACO22868.1"/>
    <property type="molecule type" value="Genomic_DNA"/>
</dbReference>
<dbReference type="RefSeq" id="WP_001208988.1">
    <property type="nucleotide sequence ID" value="NC_012469.1"/>
</dbReference>
<dbReference type="SMR" id="C1CNP4"/>
<dbReference type="KEGG" id="snt:SPT_0045"/>
<dbReference type="HOGENOM" id="CLU_018869_0_2_9"/>
<dbReference type="GO" id="GO:0005737">
    <property type="term" value="C:cytoplasm"/>
    <property type="evidence" value="ECO:0007669"/>
    <property type="project" value="UniProtKB-SubCell"/>
</dbReference>
<dbReference type="GO" id="GO:0005524">
    <property type="term" value="F:ATP binding"/>
    <property type="evidence" value="ECO:0007669"/>
    <property type="project" value="UniProtKB-UniRule"/>
</dbReference>
<dbReference type="GO" id="GO:0032267">
    <property type="term" value="F:tRNA(Ile)-lysidine synthase activity"/>
    <property type="evidence" value="ECO:0007669"/>
    <property type="project" value="UniProtKB-EC"/>
</dbReference>
<dbReference type="GO" id="GO:0006400">
    <property type="term" value="P:tRNA modification"/>
    <property type="evidence" value="ECO:0007669"/>
    <property type="project" value="UniProtKB-UniRule"/>
</dbReference>
<dbReference type="CDD" id="cd01992">
    <property type="entry name" value="TilS_N"/>
    <property type="match status" value="1"/>
</dbReference>
<dbReference type="Gene3D" id="3.40.50.620">
    <property type="entry name" value="HUPs"/>
    <property type="match status" value="1"/>
</dbReference>
<dbReference type="HAMAP" id="MF_01161">
    <property type="entry name" value="tRNA_Ile_lys_synt"/>
    <property type="match status" value="1"/>
</dbReference>
<dbReference type="InterPro" id="IPR012796">
    <property type="entry name" value="Lysidine-tRNA-synth_C"/>
</dbReference>
<dbReference type="InterPro" id="IPR014729">
    <property type="entry name" value="Rossmann-like_a/b/a_fold"/>
</dbReference>
<dbReference type="InterPro" id="IPR011063">
    <property type="entry name" value="TilS/TtcA_N"/>
</dbReference>
<dbReference type="InterPro" id="IPR012094">
    <property type="entry name" value="tRNA_Ile_lys_synt"/>
</dbReference>
<dbReference type="InterPro" id="IPR012795">
    <property type="entry name" value="tRNA_Ile_lys_synt_N"/>
</dbReference>
<dbReference type="NCBIfam" id="TIGR02433">
    <property type="entry name" value="lysidine_TilS_C"/>
    <property type="match status" value="1"/>
</dbReference>
<dbReference type="NCBIfam" id="TIGR02432">
    <property type="entry name" value="lysidine_TilS_N"/>
    <property type="match status" value="1"/>
</dbReference>
<dbReference type="PANTHER" id="PTHR43033">
    <property type="entry name" value="TRNA(ILE)-LYSIDINE SYNTHASE-RELATED"/>
    <property type="match status" value="1"/>
</dbReference>
<dbReference type="PANTHER" id="PTHR43033:SF1">
    <property type="entry name" value="TRNA(ILE)-LYSIDINE SYNTHASE-RELATED"/>
    <property type="match status" value="1"/>
</dbReference>
<dbReference type="Pfam" id="PF01171">
    <property type="entry name" value="ATP_bind_3"/>
    <property type="match status" value="1"/>
</dbReference>
<dbReference type="Pfam" id="PF11734">
    <property type="entry name" value="TilS_C"/>
    <property type="match status" value="1"/>
</dbReference>
<dbReference type="SMART" id="SM00977">
    <property type="entry name" value="TilS_C"/>
    <property type="match status" value="1"/>
</dbReference>
<dbReference type="SUPFAM" id="SSF52402">
    <property type="entry name" value="Adenine nucleotide alpha hydrolases-like"/>
    <property type="match status" value="1"/>
</dbReference>
<dbReference type="SUPFAM" id="SSF56037">
    <property type="entry name" value="PheT/TilS domain"/>
    <property type="match status" value="1"/>
</dbReference>
<proteinExistence type="inferred from homology"/>
<name>TILS_STRZT</name>
<feature type="chain" id="PRO_1000164338" description="tRNA(Ile)-lysidine synthase">
    <location>
        <begin position="1"/>
        <end position="425"/>
    </location>
</feature>
<feature type="binding site" evidence="1">
    <location>
        <begin position="27"/>
        <end position="32"/>
    </location>
    <ligand>
        <name>ATP</name>
        <dbReference type="ChEBI" id="CHEBI:30616"/>
    </ligand>
</feature>
<protein>
    <recommendedName>
        <fullName evidence="1">tRNA(Ile)-lysidine synthase</fullName>
        <ecNumber evidence="1">6.3.4.19</ecNumber>
    </recommendedName>
    <alternativeName>
        <fullName evidence="1">tRNA(Ile)-2-lysyl-cytidine synthase</fullName>
    </alternativeName>
    <alternativeName>
        <fullName evidence="1">tRNA(Ile)-lysidine synthetase</fullName>
    </alternativeName>
</protein>
<comment type="function">
    <text evidence="1">Ligates lysine onto the cytidine present at position 34 of the AUA codon-specific tRNA(Ile) that contains the anticodon CAU, in an ATP-dependent manner. Cytidine is converted to lysidine, thus changing the amino acid specificity of the tRNA from methionine to isoleucine.</text>
</comment>
<comment type="catalytic activity">
    <reaction evidence="1">
        <text>cytidine(34) in tRNA(Ile2) + L-lysine + ATP = lysidine(34) in tRNA(Ile2) + AMP + diphosphate + H(+)</text>
        <dbReference type="Rhea" id="RHEA:43744"/>
        <dbReference type="Rhea" id="RHEA-COMP:10625"/>
        <dbReference type="Rhea" id="RHEA-COMP:10670"/>
        <dbReference type="ChEBI" id="CHEBI:15378"/>
        <dbReference type="ChEBI" id="CHEBI:30616"/>
        <dbReference type="ChEBI" id="CHEBI:32551"/>
        <dbReference type="ChEBI" id="CHEBI:33019"/>
        <dbReference type="ChEBI" id="CHEBI:82748"/>
        <dbReference type="ChEBI" id="CHEBI:83665"/>
        <dbReference type="ChEBI" id="CHEBI:456215"/>
        <dbReference type="EC" id="6.3.4.19"/>
    </reaction>
</comment>
<comment type="subcellular location">
    <subcellularLocation>
        <location evidence="1">Cytoplasm</location>
    </subcellularLocation>
</comment>
<comment type="domain">
    <text>The N-terminal region contains the highly conserved SGGXDS motif, predicted to be a P-loop motif involved in ATP binding.</text>
</comment>
<comment type="similarity">
    <text evidence="1">Belongs to the tRNA(Ile)-lysidine synthase family.</text>
</comment>
<reference key="1">
    <citation type="journal article" date="2010" name="Genome Biol.">
        <title>Structure and dynamics of the pan-genome of Streptococcus pneumoniae and closely related species.</title>
        <authorList>
            <person name="Donati C."/>
            <person name="Hiller N.L."/>
            <person name="Tettelin H."/>
            <person name="Muzzi A."/>
            <person name="Croucher N.J."/>
            <person name="Angiuoli S.V."/>
            <person name="Oggioni M."/>
            <person name="Dunning Hotopp J.C."/>
            <person name="Hu F.Z."/>
            <person name="Riley D.R."/>
            <person name="Covacci A."/>
            <person name="Mitchell T.J."/>
            <person name="Bentley S.D."/>
            <person name="Kilian M."/>
            <person name="Ehrlich G.D."/>
            <person name="Rappuoli R."/>
            <person name="Moxon E.R."/>
            <person name="Masignani V."/>
        </authorList>
    </citation>
    <scope>NUCLEOTIDE SEQUENCE [LARGE SCALE GENOMIC DNA]</scope>
    <source>
        <strain>Taiwan19F-14</strain>
    </source>
</reference>
<organism>
    <name type="scientific">Streptococcus pneumoniae (strain Taiwan19F-14)</name>
    <dbReference type="NCBI Taxonomy" id="487213"/>
    <lineage>
        <taxon>Bacteria</taxon>
        <taxon>Bacillati</taxon>
        <taxon>Bacillota</taxon>
        <taxon>Bacilli</taxon>
        <taxon>Lactobacillales</taxon>
        <taxon>Streptococcaceae</taxon>
        <taxon>Streptococcus</taxon>
    </lineage>
</organism>